<evidence type="ECO:0000255" key="1">
    <source>
        <dbReference type="HAMAP-Rule" id="MF_00360"/>
    </source>
</evidence>
<evidence type="ECO:0000305" key="2"/>
<proteinExistence type="inferred from homology"/>
<protein>
    <recommendedName>
        <fullName evidence="1">Small ribosomal subunit protein bS6</fullName>
    </recommendedName>
    <alternativeName>
        <fullName evidence="2">30S ribosomal protein S6</fullName>
    </alternativeName>
</protein>
<feature type="chain" id="PRO_1000120703" description="Small ribosomal subunit protein bS6">
    <location>
        <begin position="1"/>
        <end position="112"/>
    </location>
</feature>
<accession>B6YQ08</accession>
<gene>
    <name evidence="1" type="primary">rpsF</name>
    <name type="ordered locus">CFPG_017</name>
</gene>
<comment type="function">
    <text evidence="1">Binds together with bS18 to 16S ribosomal RNA.</text>
</comment>
<comment type="similarity">
    <text evidence="1">Belongs to the bacterial ribosomal protein bS6 family.</text>
</comment>
<dbReference type="EMBL" id="AP010656">
    <property type="protein sequence ID" value="BAG83280.1"/>
    <property type="molecule type" value="Genomic_DNA"/>
</dbReference>
<dbReference type="RefSeq" id="WP_012573041.1">
    <property type="nucleotide sequence ID" value="NC_011565.1"/>
</dbReference>
<dbReference type="SMR" id="B6YQ08"/>
<dbReference type="STRING" id="511995.CFPG_017"/>
<dbReference type="KEGG" id="aps:CFPG_017"/>
<dbReference type="eggNOG" id="COG0360">
    <property type="taxonomic scope" value="Bacteria"/>
</dbReference>
<dbReference type="HOGENOM" id="CLU_113441_4_3_10"/>
<dbReference type="OrthoDB" id="9812702at2"/>
<dbReference type="Proteomes" id="UP000000723">
    <property type="component" value="Chromosome"/>
</dbReference>
<dbReference type="GO" id="GO:0005737">
    <property type="term" value="C:cytoplasm"/>
    <property type="evidence" value="ECO:0007669"/>
    <property type="project" value="UniProtKB-ARBA"/>
</dbReference>
<dbReference type="GO" id="GO:1990904">
    <property type="term" value="C:ribonucleoprotein complex"/>
    <property type="evidence" value="ECO:0007669"/>
    <property type="project" value="UniProtKB-KW"/>
</dbReference>
<dbReference type="GO" id="GO:0005840">
    <property type="term" value="C:ribosome"/>
    <property type="evidence" value="ECO:0007669"/>
    <property type="project" value="UniProtKB-KW"/>
</dbReference>
<dbReference type="GO" id="GO:0070181">
    <property type="term" value="F:small ribosomal subunit rRNA binding"/>
    <property type="evidence" value="ECO:0007669"/>
    <property type="project" value="TreeGrafter"/>
</dbReference>
<dbReference type="GO" id="GO:0003735">
    <property type="term" value="F:structural constituent of ribosome"/>
    <property type="evidence" value="ECO:0007669"/>
    <property type="project" value="InterPro"/>
</dbReference>
<dbReference type="GO" id="GO:0006412">
    <property type="term" value="P:translation"/>
    <property type="evidence" value="ECO:0007669"/>
    <property type="project" value="UniProtKB-UniRule"/>
</dbReference>
<dbReference type="CDD" id="cd00473">
    <property type="entry name" value="bS6"/>
    <property type="match status" value="1"/>
</dbReference>
<dbReference type="Gene3D" id="3.30.70.60">
    <property type="match status" value="1"/>
</dbReference>
<dbReference type="HAMAP" id="MF_00360">
    <property type="entry name" value="Ribosomal_bS6"/>
    <property type="match status" value="1"/>
</dbReference>
<dbReference type="InterPro" id="IPR000529">
    <property type="entry name" value="Ribosomal_bS6"/>
</dbReference>
<dbReference type="InterPro" id="IPR035980">
    <property type="entry name" value="Ribosomal_bS6_sf"/>
</dbReference>
<dbReference type="InterPro" id="IPR020814">
    <property type="entry name" value="Ribosomal_S6_plastid/chlpt"/>
</dbReference>
<dbReference type="InterPro" id="IPR014717">
    <property type="entry name" value="Transl_elong_EF1B/ribsomal_bS6"/>
</dbReference>
<dbReference type="NCBIfam" id="TIGR00166">
    <property type="entry name" value="S6"/>
    <property type="match status" value="1"/>
</dbReference>
<dbReference type="PANTHER" id="PTHR21011">
    <property type="entry name" value="MITOCHONDRIAL 28S RIBOSOMAL PROTEIN S6"/>
    <property type="match status" value="1"/>
</dbReference>
<dbReference type="PANTHER" id="PTHR21011:SF1">
    <property type="entry name" value="SMALL RIBOSOMAL SUBUNIT PROTEIN BS6M"/>
    <property type="match status" value="1"/>
</dbReference>
<dbReference type="Pfam" id="PF01250">
    <property type="entry name" value="Ribosomal_S6"/>
    <property type="match status" value="1"/>
</dbReference>
<dbReference type="SUPFAM" id="SSF54995">
    <property type="entry name" value="Ribosomal protein S6"/>
    <property type="match status" value="1"/>
</dbReference>
<sequence length="112" mass="13505">MNNYEAVFILTPVLSDEQVKETVNKFKDILIAEEAEIINEENWGLRKLSYPIQRKTTGFYFLLEFKSDSTIISKLETQFRRDEKVLRFLTFRQNKVFMEYALKRRNKLKETK</sequence>
<name>RS6_AZOPC</name>
<reference key="1">
    <citation type="journal article" date="2008" name="Science">
        <title>Genome of an endosymbiont coupling N2 fixation to cellulolysis within RT protist cells in termite gut.</title>
        <authorList>
            <person name="Hongoh Y."/>
            <person name="Sharma V.K."/>
            <person name="Prakash T."/>
            <person name="Noda S."/>
            <person name="Toh H."/>
            <person name="Taylor T.D."/>
            <person name="Kudo T."/>
            <person name="Sakaki Y."/>
            <person name="Toyoda A."/>
            <person name="Hattori M."/>
            <person name="Ohkuma M."/>
        </authorList>
    </citation>
    <scope>NUCLEOTIDE SEQUENCE [LARGE SCALE GENOMIC DNA]</scope>
</reference>
<organism>
    <name type="scientific">Azobacteroides pseudotrichonymphae genomovar. CFP2</name>
    <dbReference type="NCBI Taxonomy" id="511995"/>
    <lineage>
        <taxon>Bacteria</taxon>
        <taxon>Pseudomonadati</taxon>
        <taxon>Bacteroidota</taxon>
        <taxon>Bacteroidia</taxon>
        <taxon>Bacteroidales</taxon>
        <taxon>Candidatus Azobacteroides</taxon>
    </lineage>
</organism>
<keyword id="KW-1185">Reference proteome</keyword>
<keyword id="KW-0687">Ribonucleoprotein</keyword>
<keyword id="KW-0689">Ribosomal protein</keyword>
<keyword id="KW-0694">RNA-binding</keyword>
<keyword id="KW-0699">rRNA-binding</keyword>